<protein>
    <recommendedName>
        <fullName evidence="1">Tyrosine recombinase XerC</fullName>
    </recommendedName>
</protein>
<gene>
    <name evidence="1" type="primary">xerC</name>
    <name type="ordered locus">VV0089</name>
</gene>
<keyword id="KW-0131">Cell cycle</keyword>
<keyword id="KW-0132">Cell division</keyword>
<keyword id="KW-0159">Chromosome partition</keyword>
<keyword id="KW-0963">Cytoplasm</keyword>
<keyword id="KW-0229">DNA integration</keyword>
<keyword id="KW-0233">DNA recombination</keyword>
<keyword id="KW-0238">DNA-binding</keyword>
<accession>Q7MQB9</accession>
<dbReference type="EMBL" id="BA000037">
    <property type="protein sequence ID" value="BAC92853.1"/>
    <property type="status" value="ALT_INIT"/>
    <property type="molecule type" value="Genomic_DNA"/>
</dbReference>
<dbReference type="RefSeq" id="WP_011079144.1">
    <property type="nucleotide sequence ID" value="NC_005139.1"/>
</dbReference>
<dbReference type="SMR" id="Q7MQB9"/>
<dbReference type="STRING" id="672.VV93_v1c00790"/>
<dbReference type="KEGG" id="vvy:VV0089"/>
<dbReference type="eggNOG" id="COG4973">
    <property type="taxonomic scope" value="Bacteria"/>
</dbReference>
<dbReference type="HOGENOM" id="CLU_027562_9_0_6"/>
<dbReference type="Proteomes" id="UP000002675">
    <property type="component" value="Chromosome I"/>
</dbReference>
<dbReference type="GO" id="GO:0005737">
    <property type="term" value="C:cytoplasm"/>
    <property type="evidence" value="ECO:0007669"/>
    <property type="project" value="UniProtKB-SubCell"/>
</dbReference>
<dbReference type="GO" id="GO:0003677">
    <property type="term" value="F:DNA binding"/>
    <property type="evidence" value="ECO:0007669"/>
    <property type="project" value="UniProtKB-KW"/>
</dbReference>
<dbReference type="GO" id="GO:0009037">
    <property type="term" value="F:tyrosine-based site-specific recombinase activity"/>
    <property type="evidence" value="ECO:0007669"/>
    <property type="project" value="UniProtKB-UniRule"/>
</dbReference>
<dbReference type="GO" id="GO:0051301">
    <property type="term" value="P:cell division"/>
    <property type="evidence" value="ECO:0007669"/>
    <property type="project" value="UniProtKB-KW"/>
</dbReference>
<dbReference type="GO" id="GO:0007059">
    <property type="term" value="P:chromosome segregation"/>
    <property type="evidence" value="ECO:0007669"/>
    <property type="project" value="UniProtKB-UniRule"/>
</dbReference>
<dbReference type="GO" id="GO:0006313">
    <property type="term" value="P:DNA transposition"/>
    <property type="evidence" value="ECO:0007669"/>
    <property type="project" value="UniProtKB-UniRule"/>
</dbReference>
<dbReference type="CDD" id="cd00798">
    <property type="entry name" value="INT_XerDC_C"/>
    <property type="match status" value="1"/>
</dbReference>
<dbReference type="FunFam" id="1.10.443.10:FF:000002">
    <property type="entry name" value="Tyrosine recombinase XerC"/>
    <property type="match status" value="1"/>
</dbReference>
<dbReference type="Gene3D" id="1.10.150.130">
    <property type="match status" value="1"/>
</dbReference>
<dbReference type="Gene3D" id="1.10.443.10">
    <property type="entry name" value="Intergrase catalytic core"/>
    <property type="match status" value="1"/>
</dbReference>
<dbReference type="HAMAP" id="MF_01808">
    <property type="entry name" value="Recomb_XerC_XerD"/>
    <property type="match status" value="1"/>
</dbReference>
<dbReference type="InterPro" id="IPR044068">
    <property type="entry name" value="CB"/>
</dbReference>
<dbReference type="InterPro" id="IPR011010">
    <property type="entry name" value="DNA_brk_join_enz"/>
</dbReference>
<dbReference type="InterPro" id="IPR013762">
    <property type="entry name" value="Integrase-like_cat_sf"/>
</dbReference>
<dbReference type="InterPro" id="IPR002104">
    <property type="entry name" value="Integrase_catalytic"/>
</dbReference>
<dbReference type="InterPro" id="IPR010998">
    <property type="entry name" value="Integrase_recombinase_N"/>
</dbReference>
<dbReference type="InterPro" id="IPR004107">
    <property type="entry name" value="Integrase_SAM-like_N"/>
</dbReference>
<dbReference type="InterPro" id="IPR011931">
    <property type="entry name" value="Recomb_XerC"/>
</dbReference>
<dbReference type="InterPro" id="IPR023009">
    <property type="entry name" value="Tyrosine_recombinase_XerC/XerD"/>
</dbReference>
<dbReference type="InterPro" id="IPR050090">
    <property type="entry name" value="Tyrosine_recombinase_XerCD"/>
</dbReference>
<dbReference type="NCBIfam" id="NF001399">
    <property type="entry name" value="PRK00283.1"/>
    <property type="match status" value="1"/>
</dbReference>
<dbReference type="NCBIfam" id="TIGR02224">
    <property type="entry name" value="recomb_XerC"/>
    <property type="match status" value="1"/>
</dbReference>
<dbReference type="PANTHER" id="PTHR30349">
    <property type="entry name" value="PHAGE INTEGRASE-RELATED"/>
    <property type="match status" value="1"/>
</dbReference>
<dbReference type="PANTHER" id="PTHR30349:SF81">
    <property type="entry name" value="TYROSINE RECOMBINASE XERC"/>
    <property type="match status" value="1"/>
</dbReference>
<dbReference type="Pfam" id="PF02899">
    <property type="entry name" value="Phage_int_SAM_1"/>
    <property type="match status" value="1"/>
</dbReference>
<dbReference type="Pfam" id="PF00589">
    <property type="entry name" value="Phage_integrase"/>
    <property type="match status" value="1"/>
</dbReference>
<dbReference type="SUPFAM" id="SSF56349">
    <property type="entry name" value="DNA breaking-rejoining enzymes"/>
    <property type="match status" value="1"/>
</dbReference>
<dbReference type="SUPFAM" id="SSF47823">
    <property type="entry name" value="lambda integrase-like, N-terminal domain"/>
    <property type="match status" value="1"/>
</dbReference>
<dbReference type="PROSITE" id="PS51900">
    <property type="entry name" value="CB"/>
    <property type="match status" value="1"/>
</dbReference>
<dbReference type="PROSITE" id="PS51898">
    <property type="entry name" value="TYR_RECOMBINASE"/>
    <property type="match status" value="1"/>
</dbReference>
<feature type="chain" id="PRO_0000095346" description="Tyrosine recombinase XerC">
    <location>
        <begin position="1"/>
        <end position="316"/>
    </location>
</feature>
<feature type="domain" description="Core-binding (CB)" evidence="3">
    <location>
        <begin position="11"/>
        <end position="97"/>
    </location>
</feature>
<feature type="domain" description="Tyr recombinase" evidence="2">
    <location>
        <begin position="118"/>
        <end position="298"/>
    </location>
</feature>
<feature type="active site" evidence="1">
    <location>
        <position position="157"/>
    </location>
</feature>
<feature type="active site" evidence="1">
    <location>
        <position position="181"/>
    </location>
</feature>
<feature type="active site" evidence="1">
    <location>
        <position position="250"/>
    </location>
</feature>
<feature type="active site" evidence="1">
    <location>
        <position position="253"/>
    </location>
</feature>
<feature type="active site" evidence="1">
    <location>
        <position position="276"/>
    </location>
</feature>
<feature type="active site" description="O-(3'-phospho-DNA)-tyrosine intermediate" evidence="1">
    <location>
        <position position="285"/>
    </location>
</feature>
<proteinExistence type="inferred from homology"/>
<reference key="1">
    <citation type="journal article" date="2003" name="Genome Res.">
        <title>Comparative genome analysis of Vibrio vulnificus, a marine pathogen.</title>
        <authorList>
            <person name="Chen C.-Y."/>
            <person name="Wu K.-M."/>
            <person name="Chang Y.-C."/>
            <person name="Chang C.-H."/>
            <person name="Tsai H.-C."/>
            <person name="Liao T.-L."/>
            <person name="Liu Y.-M."/>
            <person name="Chen H.-J."/>
            <person name="Shen A.B.-T."/>
            <person name="Li J.-C."/>
            <person name="Su T.-L."/>
            <person name="Shao C.-P."/>
            <person name="Lee C.-T."/>
            <person name="Hor L.-I."/>
            <person name="Tsai S.-F."/>
        </authorList>
    </citation>
    <scope>NUCLEOTIDE SEQUENCE [LARGE SCALE GENOMIC DNA]</scope>
    <source>
        <strain>YJ016</strain>
    </source>
</reference>
<evidence type="ECO:0000255" key="1">
    <source>
        <dbReference type="HAMAP-Rule" id="MF_01808"/>
    </source>
</evidence>
<evidence type="ECO:0000255" key="2">
    <source>
        <dbReference type="PROSITE-ProRule" id="PRU01246"/>
    </source>
</evidence>
<evidence type="ECO:0000255" key="3">
    <source>
        <dbReference type="PROSITE-ProRule" id="PRU01248"/>
    </source>
</evidence>
<evidence type="ECO:0000305" key="4"/>
<organism>
    <name type="scientific">Vibrio vulnificus (strain YJ016)</name>
    <dbReference type="NCBI Taxonomy" id="196600"/>
    <lineage>
        <taxon>Bacteria</taxon>
        <taxon>Pseudomonadati</taxon>
        <taxon>Pseudomonadota</taxon>
        <taxon>Gammaproteobacteria</taxon>
        <taxon>Vibrionales</taxon>
        <taxon>Vibrionaceae</taxon>
        <taxon>Vibrio</taxon>
    </lineage>
</organism>
<sequence length="316" mass="35712">MTTASNTPLPSGLRKPLDQFYEYLRAEKGLSLHTQRNYKQQLETMAEHLHSMGLKAWPQVDAGWVRQLAGKGMREGMKASSIATRLSSLRSFFDFLILRGILTANPAKGVSAPRKKRPLPKNLDVDEVNQLLEVNEDDPLAIRDRAIMELMYGAGLRLAELVDIDVRDVHLRSGEIRVIGKGNKERKVPFAGMAVEWVGKWLKVRSGLADPSEPALFVSKLGTRISHRSVQKRMAEWGQKQAVASHITPHKLRHSFATHILESSNNLRAVQELLGHENISTTQIYTHLDFQHLADVYDQAHPRARKKSSQHKEEDE</sequence>
<name>XERC_VIBVY</name>
<comment type="function">
    <text evidence="1">Site-specific tyrosine recombinase, which acts by catalyzing the cutting and rejoining of the recombining DNA molecules. The XerC-XerD complex is essential to convert dimers of the bacterial chromosome into monomers to permit their segregation at cell division. It also contributes to the segregational stability of plasmids.</text>
</comment>
<comment type="subunit">
    <text evidence="1">Forms a cyclic heterotetrameric complex composed of two molecules of XerC and two molecules of XerD.</text>
</comment>
<comment type="subcellular location">
    <subcellularLocation>
        <location evidence="1">Cytoplasm</location>
    </subcellularLocation>
</comment>
<comment type="similarity">
    <text evidence="1">Belongs to the 'phage' integrase family. XerC subfamily.</text>
</comment>
<comment type="sequence caution" evidence="4">
    <conflict type="erroneous initiation">
        <sequence resource="EMBL-CDS" id="BAC92853"/>
    </conflict>
</comment>